<proteinExistence type="evidence at transcript level"/>
<reference key="1">
    <citation type="journal article" date="2011" name="J. Exp. Biol.">
        <title>A diverse family of novel peptide toxins from an unusual cone snail, Conus californicus.</title>
        <authorList>
            <person name="Gilly W.F."/>
            <person name="Richmond T.A."/>
            <person name="Duda T.F. Jr."/>
            <person name="Elliger C."/>
            <person name="Lebaric Z."/>
            <person name="Schulz J."/>
            <person name="Bingham J.P."/>
            <person name="Sweedler J.V."/>
        </authorList>
    </citation>
    <scope>NUCLEOTIDE SEQUENCE [MRNA]</scope>
    <source>
        <tissue>Venom duct</tissue>
    </source>
</reference>
<accession>A6YR26</accession>
<evidence type="ECO:0000250" key="1"/>
<evidence type="ECO:0000305" key="2"/>
<name>COC1E_CONCL</name>
<comment type="function">
    <text evidence="1">Mu-conotoxins block voltage-gated sodium channels. This toxin reversibly blocks voltage-gated sodium channel in cephalopods, with no alteration in the voltage dependence of sodium conductance or on the kinetics of inactivation (By similarity).</text>
</comment>
<comment type="subcellular location">
    <subcellularLocation>
        <location evidence="1">Secreted</location>
    </subcellularLocation>
</comment>
<comment type="tissue specificity">
    <text>Expressed by the venom duct.</text>
</comment>
<comment type="domain">
    <text>The cysteine framework is XII (C-C-C-C-CC-C-C).</text>
</comment>
<sequence length="44" mass="4838">DVCDSLVGGHCIHNGCWCDQDAPHGNCCDTGGCVWWWCPGTKWD</sequence>
<keyword id="KW-0102">Bromination</keyword>
<keyword id="KW-1015">Disulfide bond</keyword>
<keyword id="KW-0379">Hydroxylation</keyword>
<keyword id="KW-0872">Ion channel impairing toxin</keyword>
<keyword id="KW-0528">Neurotoxin</keyword>
<keyword id="KW-0964">Secreted</keyword>
<keyword id="KW-0800">Toxin</keyword>
<organism>
    <name type="scientific">Californiconus californicus</name>
    <name type="common">California cone</name>
    <name type="synonym">Conus californicus</name>
    <dbReference type="NCBI Taxonomy" id="1736779"/>
    <lineage>
        <taxon>Eukaryota</taxon>
        <taxon>Metazoa</taxon>
        <taxon>Spiralia</taxon>
        <taxon>Lophotrochozoa</taxon>
        <taxon>Mollusca</taxon>
        <taxon>Gastropoda</taxon>
        <taxon>Caenogastropoda</taxon>
        <taxon>Neogastropoda</taxon>
        <taxon>Conoidea</taxon>
        <taxon>Conidae</taxon>
        <taxon>Californiconus</taxon>
    </lineage>
</organism>
<dbReference type="EMBL" id="EF644180">
    <property type="protein sequence ID" value="ABR92950.1"/>
    <property type="molecule type" value="mRNA"/>
</dbReference>
<dbReference type="ConoServer" id="799">
    <property type="toxin name" value="Cal12.1.1e"/>
</dbReference>
<dbReference type="GO" id="GO:0005576">
    <property type="term" value="C:extracellular region"/>
    <property type="evidence" value="ECO:0007669"/>
    <property type="project" value="UniProtKB-SubCell"/>
</dbReference>
<dbReference type="GO" id="GO:0099106">
    <property type="term" value="F:ion channel regulator activity"/>
    <property type="evidence" value="ECO:0007669"/>
    <property type="project" value="UniProtKB-KW"/>
</dbReference>
<dbReference type="GO" id="GO:0090729">
    <property type="term" value="F:toxin activity"/>
    <property type="evidence" value="ECO:0007669"/>
    <property type="project" value="UniProtKB-KW"/>
</dbReference>
<feature type="peptide" id="PRO_0000392268" description="Mu-conotoxin-like Cal 12.1.1e">
    <location>
        <begin position="1"/>
        <end position="44"/>
    </location>
</feature>
<feature type="modified residue" description="6'-bromotryptophan" evidence="1">
    <location>
        <position position="17"/>
    </location>
</feature>
<feature type="modified residue" description="4-hydroxyproline" evidence="1">
    <location>
        <position position="23"/>
    </location>
</feature>
<feature type="modified residue" description="6'-bromotryptophan" evidence="1">
    <location>
        <position position="36"/>
    </location>
</feature>
<feature type="modified residue" description="6'-bromotryptophan" evidence="1">
    <location>
        <position position="37"/>
    </location>
</feature>
<feature type="modified residue" description="4-hydroxyproline" evidence="1">
    <location>
        <position position="39"/>
    </location>
</feature>
<feature type="modified residue" description="6'-bromotryptophan" evidence="1">
    <location>
        <position position="43"/>
    </location>
</feature>
<feature type="disulfide bond" evidence="2">
    <location>
        <begin position="3"/>
        <end position="16"/>
    </location>
</feature>
<feature type="disulfide bond" evidence="1">
    <location>
        <begin position="11"/>
        <end position="28"/>
    </location>
</feature>
<feature type="disulfide bond" evidence="1">
    <location>
        <begin position="18"/>
        <end position="33"/>
    </location>
</feature>
<feature type="disulfide bond" evidence="1">
    <location>
        <begin position="27"/>
        <end position="38"/>
    </location>
</feature>
<protein>
    <recommendedName>
        <fullName>Mu-conotoxin-like Cal 12.1.1e</fullName>
    </recommendedName>
    <alternativeName>
        <fullName>Conotoxin CalTx 12.1.1G</fullName>
    </alternativeName>
</protein>